<gene>
    <name evidence="7" type="primary">wtf5</name>
    <name type="synonym">wtf4</name>
    <name evidence="7" type="ORF">SPCC794.02</name>
</gene>
<evidence type="ECO:0000250" key="1">
    <source>
        <dbReference type="UniProtKB" id="A0A218N034"/>
    </source>
</evidence>
<evidence type="ECO:0000250" key="2">
    <source>
        <dbReference type="UniProtKB" id="A0A482ATU4"/>
    </source>
</evidence>
<evidence type="ECO:0000250" key="3">
    <source>
        <dbReference type="UniProtKB" id="O74420"/>
    </source>
</evidence>
<evidence type="ECO:0000255" key="4"/>
<evidence type="ECO:0000256" key="5">
    <source>
        <dbReference type="SAM" id="MobiDB-lite"/>
    </source>
</evidence>
<evidence type="ECO:0000305" key="6"/>
<evidence type="ECO:0000312" key="7">
    <source>
        <dbReference type="PomBase" id="SPCC794.02"/>
    </source>
</evidence>
<feature type="chain" id="PRO_0000193222" description="Meiotic drive suppressor wtf5">
    <location>
        <begin position="1"/>
        <end position="269"/>
    </location>
</feature>
<feature type="transmembrane region" description="Helical" evidence="4">
    <location>
        <begin position="73"/>
        <end position="95"/>
    </location>
</feature>
<feature type="transmembrane region" description="Helical" evidence="4">
    <location>
        <begin position="110"/>
        <end position="132"/>
    </location>
</feature>
<feature type="transmembrane region" description="Helical" evidence="4">
    <location>
        <begin position="206"/>
        <end position="228"/>
    </location>
</feature>
<feature type="region of interest" description="Disordered" evidence="5">
    <location>
        <begin position="1"/>
        <end position="65"/>
    </location>
</feature>
<feature type="compositionally biased region" description="Basic and acidic residues" evidence="5">
    <location>
        <begin position="19"/>
        <end position="30"/>
    </location>
</feature>
<keyword id="KW-0472">Membrane</keyword>
<keyword id="KW-1185">Reference proteome</keyword>
<keyword id="KW-0812">Transmembrane</keyword>
<keyword id="KW-1133">Transmembrane helix</keyword>
<keyword id="KW-0926">Vacuole</keyword>
<name>WTF5_SCHPO</name>
<sequence length="269" mass="30709">MKNNYTSLKSPLDEEDELKTDHEIDLEKGPLPEYDSEEESTLPPYSDHALVNNPPNTHRENHSYGTTDNSSPLLIILLISFTSIILFNAPEVCYLKYKDAFFKNYGAAEWTLFGFWCLVCTLALIFLTYFYETWTKAVKVTVISLAKCVKVTAIFLAQCVKACGKGIKHFLKKWENMPMAFSEVFLFNILVGSPRMNLRYIFGDRWGLKCSLADHIIFVVLSILVFIAETVKPGSIRVNLIRKMGYEAKQQVNEYTAVPLREMNSESEA</sequence>
<accession>Q8TF80</accession>
<protein>
    <recommendedName>
        <fullName evidence="7">Meiotic drive suppressor wtf5</fullName>
    </recommendedName>
</protein>
<proteinExistence type="inferred from homology"/>
<reference key="1">
    <citation type="journal article" date="2002" name="Nature">
        <title>The genome sequence of Schizosaccharomyces pombe.</title>
        <authorList>
            <person name="Wood V."/>
            <person name="Gwilliam R."/>
            <person name="Rajandream M.A."/>
            <person name="Lyne M.H."/>
            <person name="Lyne R."/>
            <person name="Stewart A."/>
            <person name="Sgouros J.G."/>
            <person name="Peat N."/>
            <person name="Hayles J."/>
            <person name="Baker S.G."/>
            <person name="Basham D."/>
            <person name="Bowman S."/>
            <person name="Brooks K."/>
            <person name="Brown D."/>
            <person name="Brown S."/>
            <person name="Chillingworth T."/>
            <person name="Churcher C.M."/>
            <person name="Collins M."/>
            <person name="Connor R."/>
            <person name="Cronin A."/>
            <person name="Davis P."/>
            <person name="Feltwell T."/>
            <person name="Fraser A."/>
            <person name="Gentles S."/>
            <person name="Goble A."/>
            <person name="Hamlin N."/>
            <person name="Harris D.E."/>
            <person name="Hidalgo J."/>
            <person name="Hodgson G."/>
            <person name="Holroyd S."/>
            <person name="Hornsby T."/>
            <person name="Howarth S."/>
            <person name="Huckle E.J."/>
            <person name="Hunt S."/>
            <person name="Jagels K."/>
            <person name="James K.D."/>
            <person name="Jones L."/>
            <person name="Jones M."/>
            <person name="Leather S."/>
            <person name="McDonald S."/>
            <person name="McLean J."/>
            <person name="Mooney P."/>
            <person name="Moule S."/>
            <person name="Mungall K.L."/>
            <person name="Murphy L.D."/>
            <person name="Niblett D."/>
            <person name="Odell C."/>
            <person name="Oliver K."/>
            <person name="O'Neil S."/>
            <person name="Pearson D."/>
            <person name="Quail M.A."/>
            <person name="Rabbinowitsch E."/>
            <person name="Rutherford K.M."/>
            <person name="Rutter S."/>
            <person name="Saunders D."/>
            <person name="Seeger K."/>
            <person name="Sharp S."/>
            <person name="Skelton J."/>
            <person name="Simmonds M.N."/>
            <person name="Squares R."/>
            <person name="Squares S."/>
            <person name="Stevens K."/>
            <person name="Taylor K."/>
            <person name="Taylor R.G."/>
            <person name="Tivey A."/>
            <person name="Walsh S.V."/>
            <person name="Warren T."/>
            <person name="Whitehead S."/>
            <person name="Woodward J.R."/>
            <person name="Volckaert G."/>
            <person name="Aert R."/>
            <person name="Robben J."/>
            <person name="Grymonprez B."/>
            <person name="Weltjens I."/>
            <person name="Vanstreels E."/>
            <person name="Rieger M."/>
            <person name="Schaefer M."/>
            <person name="Mueller-Auer S."/>
            <person name="Gabel C."/>
            <person name="Fuchs M."/>
            <person name="Duesterhoeft A."/>
            <person name="Fritzc C."/>
            <person name="Holzer E."/>
            <person name="Moestl D."/>
            <person name="Hilbert H."/>
            <person name="Borzym K."/>
            <person name="Langer I."/>
            <person name="Beck A."/>
            <person name="Lehrach H."/>
            <person name="Reinhardt R."/>
            <person name="Pohl T.M."/>
            <person name="Eger P."/>
            <person name="Zimmermann W."/>
            <person name="Wedler H."/>
            <person name="Wambutt R."/>
            <person name="Purnelle B."/>
            <person name="Goffeau A."/>
            <person name="Cadieu E."/>
            <person name="Dreano S."/>
            <person name="Gloux S."/>
            <person name="Lelaure V."/>
            <person name="Mottier S."/>
            <person name="Galibert F."/>
            <person name="Aves S.J."/>
            <person name="Xiang Z."/>
            <person name="Hunt C."/>
            <person name="Moore K."/>
            <person name="Hurst S.M."/>
            <person name="Lucas M."/>
            <person name="Rochet M."/>
            <person name="Gaillardin C."/>
            <person name="Tallada V.A."/>
            <person name="Garzon A."/>
            <person name="Thode G."/>
            <person name="Daga R.R."/>
            <person name="Cruzado L."/>
            <person name="Jimenez J."/>
            <person name="Sanchez M."/>
            <person name="del Rey F."/>
            <person name="Benito J."/>
            <person name="Dominguez A."/>
            <person name="Revuelta J.L."/>
            <person name="Moreno S."/>
            <person name="Armstrong J."/>
            <person name="Forsburg S.L."/>
            <person name="Cerutti L."/>
            <person name="Lowe T."/>
            <person name="McCombie W.R."/>
            <person name="Paulsen I."/>
            <person name="Potashkin J."/>
            <person name="Shpakovski G.V."/>
            <person name="Ussery D."/>
            <person name="Barrell B.G."/>
            <person name="Nurse P."/>
        </authorList>
    </citation>
    <scope>NUCLEOTIDE SEQUENCE [LARGE SCALE GENOMIC DNA]</scope>
    <source>
        <strain>972 / ATCC 24843</strain>
    </source>
</reference>
<organism>
    <name type="scientific">Schizosaccharomyces pombe (strain 972 / ATCC 24843)</name>
    <name type="common">Fission yeast</name>
    <dbReference type="NCBI Taxonomy" id="284812"/>
    <lineage>
        <taxon>Eukaryota</taxon>
        <taxon>Fungi</taxon>
        <taxon>Dikarya</taxon>
        <taxon>Ascomycota</taxon>
        <taxon>Taphrinomycotina</taxon>
        <taxon>Schizosaccharomycetes</taxon>
        <taxon>Schizosaccharomycetales</taxon>
        <taxon>Schizosaccharomycetaceae</taxon>
        <taxon>Schizosaccharomyces</taxon>
    </lineage>
</organism>
<comment type="function">
    <text evidence="1 2">Acts as a suppressor component of the dual wtf meiotic drive system, and can suppress but not confer meiotic drive by compatible poisons (By similarity). Wtf meiotic drive systems promote unequal transmission of alleles from the parental zygote to progeny spores by encoding a poison and an antidote from the same locus; the poison is trans-acting and forms toxic aggregates in all spores within an ascus, wherease the antidote is spore-specific and targets aggregates for degradation by the vacuole (By similarity). Meiotic drive by wtf systems therefore lead to poisoning of all progeny that do not inherit the dual poison/antidote allele, or express a compatible antidote (By similarity).</text>
</comment>
<comment type="subunit">
    <text evidence="1 3">Homomer (By similarity). Interacts with other proteins that exhibit high sequence similarity (By similarity).</text>
</comment>
<comment type="subcellular location">
    <subcellularLocation>
        <location evidence="1 4">Spore membrane</location>
        <topology evidence="4">Multi-pass membrane protein</topology>
    </subcellularLocation>
    <subcellularLocation>
        <location evidence="1 4">Vacuole membrane</location>
        <topology evidence="4">Multi-pass membrane protein</topology>
    </subcellularLocation>
</comment>
<comment type="similarity">
    <text evidence="6">Belongs to the WTF family.</text>
</comment>
<dbReference type="EMBL" id="CU329672">
    <property type="protein sequence ID" value="CAA19130.1"/>
    <property type="molecule type" value="Genomic_DNA"/>
</dbReference>
<dbReference type="PIR" id="T41611">
    <property type="entry name" value="T41611"/>
</dbReference>
<dbReference type="RefSeq" id="NP_587750.1">
    <property type="nucleotide sequence ID" value="NM_001022744.2"/>
</dbReference>
<dbReference type="BioGRID" id="275642">
    <property type="interactions" value="1"/>
</dbReference>
<dbReference type="STRING" id="284812.Q8TF80"/>
<dbReference type="PaxDb" id="4896-SPCC794.02.1"/>
<dbReference type="EnsemblFungi" id="SPCC794.02.1">
    <property type="protein sequence ID" value="SPCC794.02.1:pep"/>
    <property type="gene ID" value="SPCC794.02"/>
</dbReference>
<dbReference type="GeneID" id="2539070"/>
<dbReference type="KEGG" id="spo:2539070"/>
<dbReference type="PomBase" id="SPCC794.02">
    <property type="gene designation" value="wtf5"/>
</dbReference>
<dbReference type="VEuPathDB" id="FungiDB:SPCC794.02"/>
<dbReference type="HOGENOM" id="CLU_092895_0_0_1"/>
<dbReference type="InParanoid" id="Q8TF80"/>
<dbReference type="PhylomeDB" id="Q8TF80"/>
<dbReference type="PRO" id="PR:Q8TF80"/>
<dbReference type="Proteomes" id="UP000002485">
    <property type="component" value="Chromosome III"/>
</dbReference>
<dbReference type="GO" id="GO:0005737">
    <property type="term" value="C:cytoplasm"/>
    <property type="evidence" value="ECO:0000250"/>
    <property type="project" value="PomBase"/>
</dbReference>
<dbReference type="GO" id="GO:0005783">
    <property type="term" value="C:endoplasmic reticulum"/>
    <property type="evidence" value="ECO:0007005"/>
    <property type="project" value="PomBase"/>
</dbReference>
<dbReference type="GO" id="GO:0005774">
    <property type="term" value="C:vacuolar membrane"/>
    <property type="evidence" value="ECO:0007669"/>
    <property type="project" value="UniProtKB-SubCell"/>
</dbReference>
<dbReference type="GO" id="GO:0110134">
    <property type="term" value="P:meiotic drive"/>
    <property type="evidence" value="ECO:0000255"/>
    <property type="project" value="PomBase"/>
</dbReference>
<dbReference type="InterPro" id="IPR004982">
    <property type="entry name" value="WTF"/>
</dbReference>
<dbReference type="Pfam" id="PF03303">
    <property type="entry name" value="WTF"/>
    <property type="match status" value="2"/>
</dbReference>